<reference key="1">
    <citation type="journal article" date="2004" name="Nucleic Acids Res.">
        <title>Whole genome comparisons of serotype 4b and 1/2a strains of the food-borne pathogen Listeria monocytogenes reveal new insights into the core genome components of this species.</title>
        <authorList>
            <person name="Nelson K.E."/>
            <person name="Fouts D.E."/>
            <person name="Mongodin E.F."/>
            <person name="Ravel J."/>
            <person name="DeBoy R.T."/>
            <person name="Kolonay J.F."/>
            <person name="Rasko D.A."/>
            <person name="Angiuoli S.V."/>
            <person name="Gill S.R."/>
            <person name="Paulsen I.T."/>
            <person name="Peterson J.D."/>
            <person name="White O."/>
            <person name="Nelson W.C."/>
            <person name="Nierman W.C."/>
            <person name="Beanan M.J."/>
            <person name="Brinkac L.M."/>
            <person name="Daugherty S.C."/>
            <person name="Dodson R.J."/>
            <person name="Durkin A.S."/>
            <person name="Madupu R."/>
            <person name="Haft D.H."/>
            <person name="Selengut J."/>
            <person name="Van Aken S.E."/>
            <person name="Khouri H.M."/>
            <person name="Fedorova N."/>
            <person name="Forberger H.A."/>
            <person name="Tran B."/>
            <person name="Kathariou S."/>
            <person name="Wonderling L.D."/>
            <person name="Uhlich G.A."/>
            <person name="Bayles D.O."/>
            <person name="Luchansky J.B."/>
            <person name="Fraser C.M."/>
        </authorList>
    </citation>
    <scope>NUCLEOTIDE SEQUENCE [LARGE SCALE GENOMIC DNA]</scope>
    <source>
        <strain>F2365</strain>
    </source>
</reference>
<organism>
    <name type="scientific">Listeria monocytogenes serotype 4b (strain F2365)</name>
    <dbReference type="NCBI Taxonomy" id="265669"/>
    <lineage>
        <taxon>Bacteria</taxon>
        <taxon>Bacillati</taxon>
        <taxon>Bacillota</taxon>
        <taxon>Bacilli</taxon>
        <taxon>Bacillales</taxon>
        <taxon>Listeriaceae</taxon>
        <taxon>Listeria</taxon>
    </lineage>
</organism>
<comment type="function">
    <text evidence="1">Involved in the isomerization of 5-deoxy-glucuronate (5DG) to 5-dehydro-2-deoxy-D-gluconate (DKG or 2-deoxy-5-keto-D-gluconate).</text>
</comment>
<comment type="catalytic activity">
    <reaction evidence="1">
        <text>5-deoxy-D-glucuronate = 5-dehydro-2-deoxy-D-gluconate</text>
        <dbReference type="Rhea" id="RHEA:25840"/>
        <dbReference type="ChEBI" id="CHEBI:16669"/>
        <dbReference type="ChEBI" id="CHEBI:58852"/>
        <dbReference type="EC" id="5.3.1.30"/>
    </reaction>
</comment>
<comment type="pathway">
    <text evidence="1">Polyol metabolism; myo-inositol degradation into acetyl-CoA; acetyl-CoA from myo-inositol: step 4/7.</text>
</comment>
<comment type="similarity">
    <text evidence="1">Belongs to the isomerase IolB family.</text>
</comment>
<dbReference type="EC" id="5.3.1.30" evidence="1"/>
<dbReference type="EMBL" id="AE017262">
    <property type="protein sequence ID" value="AAT03181.1"/>
    <property type="molecule type" value="Genomic_DNA"/>
</dbReference>
<dbReference type="RefSeq" id="WP_003724309.1">
    <property type="nucleotide sequence ID" value="NC_002973.6"/>
</dbReference>
<dbReference type="SMR" id="Q723T0"/>
<dbReference type="KEGG" id="lmf:LMOf2365_0396"/>
<dbReference type="HOGENOM" id="CLU_066438_1_0_9"/>
<dbReference type="UniPathway" id="UPA00076">
    <property type="reaction ID" value="UER00920"/>
</dbReference>
<dbReference type="GO" id="GO:0102482">
    <property type="term" value="F:5-deoxy-D-glucuronate isomerase activity"/>
    <property type="evidence" value="ECO:0007669"/>
    <property type="project" value="UniProtKB-EC"/>
</dbReference>
<dbReference type="GO" id="GO:0008880">
    <property type="term" value="F:glucuronate isomerase activity"/>
    <property type="evidence" value="ECO:0007669"/>
    <property type="project" value="InterPro"/>
</dbReference>
<dbReference type="GO" id="GO:0019310">
    <property type="term" value="P:inositol catabolic process"/>
    <property type="evidence" value="ECO:0007669"/>
    <property type="project" value="UniProtKB-UniRule"/>
</dbReference>
<dbReference type="FunFam" id="2.60.120.10:FF:000202">
    <property type="entry name" value="5-deoxy-glucuronate isomerase"/>
    <property type="match status" value="1"/>
</dbReference>
<dbReference type="FunFam" id="2.60.120.10:FF:000231">
    <property type="entry name" value="5-deoxy-glucuronate isomerase"/>
    <property type="match status" value="1"/>
</dbReference>
<dbReference type="Gene3D" id="2.60.120.10">
    <property type="entry name" value="Jelly Rolls"/>
    <property type="match status" value="2"/>
</dbReference>
<dbReference type="HAMAP" id="MF_01673">
    <property type="entry name" value="IolB"/>
    <property type="match status" value="1"/>
</dbReference>
<dbReference type="InterPro" id="IPR024203">
    <property type="entry name" value="Deoxy-glucuronate_isom_IolB"/>
</dbReference>
<dbReference type="InterPro" id="IPR023770">
    <property type="entry name" value="IolB_Bacilli"/>
</dbReference>
<dbReference type="InterPro" id="IPR021120">
    <property type="entry name" value="KduI/IolB_isomerase"/>
</dbReference>
<dbReference type="InterPro" id="IPR014710">
    <property type="entry name" value="RmlC-like_jellyroll"/>
</dbReference>
<dbReference type="InterPro" id="IPR011051">
    <property type="entry name" value="RmlC_Cupin_sf"/>
</dbReference>
<dbReference type="NCBIfam" id="TIGR04378">
    <property type="entry name" value="myo_inos_iolB"/>
    <property type="match status" value="1"/>
</dbReference>
<dbReference type="PANTHER" id="PTHR39193">
    <property type="entry name" value="5-DEOXY-GLUCURONATE ISOMERASE"/>
    <property type="match status" value="1"/>
</dbReference>
<dbReference type="PANTHER" id="PTHR39193:SF1">
    <property type="entry name" value="5-DEOXY-GLUCURONATE ISOMERASE"/>
    <property type="match status" value="1"/>
</dbReference>
<dbReference type="Pfam" id="PF04962">
    <property type="entry name" value="KduI"/>
    <property type="match status" value="1"/>
</dbReference>
<dbReference type="PIRSF" id="PIRSF036628">
    <property type="entry name" value="IolB"/>
    <property type="match status" value="1"/>
</dbReference>
<dbReference type="SUPFAM" id="SSF51182">
    <property type="entry name" value="RmlC-like cupins"/>
    <property type="match status" value="1"/>
</dbReference>
<sequence>MGKLLRKPLNERIAPGITFVQDINQANSPLSYVGFRLIEMEKGAIYQEELTDLECCIVALTGKITVSEGDNIFAEIGTRANVFEKIPTDSVFISGGRTFQVKADTEKARVALCYSQANRDLPTTLIKASDNSIEQRGKYQNKRLVHNILPDVSEVASSLLVVEVYTDGGNFSSYPPHKHDRDNLPAESLLEESYYHEINPEQGFIFQRVYTDDRTLDETMAVEHQNAVIVPEGYHPVGVPDGYDSYYLNVMAGPKRVWKFHNDPDHEWILERD</sequence>
<name>IOLB_LISMF</name>
<gene>
    <name evidence="1" type="primary">iolB</name>
    <name type="ordered locus">LMOf2365_0396</name>
</gene>
<keyword id="KW-0413">Isomerase</keyword>
<evidence type="ECO:0000255" key="1">
    <source>
        <dbReference type="HAMAP-Rule" id="MF_01673"/>
    </source>
</evidence>
<proteinExistence type="inferred from homology"/>
<accession>Q723T0</accession>
<feature type="chain" id="PRO_0000352392" description="5-deoxy-glucuronate isomerase">
    <location>
        <begin position="1"/>
        <end position="273"/>
    </location>
</feature>
<protein>
    <recommendedName>
        <fullName evidence="1">5-deoxy-glucuronate isomerase</fullName>
        <shortName evidence="1">5DG isomerase</shortName>
        <ecNumber evidence="1">5.3.1.30</ecNumber>
    </recommendedName>
</protein>